<evidence type="ECO:0000255" key="1">
    <source>
        <dbReference type="HAMAP-Rule" id="MF_00323"/>
    </source>
</evidence>
<protein>
    <recommendedName>
        <fullName evidence="1">Ferrochelatase</fullName>
        <ecNumber evidence="1">4.98.1.1</ecNumber>
    </recommendedName>
    <alternativeName>
        <fullName evidence="1">Heme synthase</fullName>
    </alternativeName>
    <alternativeName>
        <fullName evidence="1">Protoheme ferro-lyase</fullName>
    </alternativeName>
</protein>
<dbReference type="EC" id="4.98.1.1" evidence="1"/>
<dbReference type="EMBL" id="CP000487">
    <property type="protein sequence ID" value="ABK82735.1"/>
    <property type="molecule type" value="Genomic_DNA"/>
</dbReference>
<dbReference type="RefSeq" id="WP_002849117.1">
    <property type="nucleotide sequence ID" value="NC_008599.1"/>
</dbReference>
<dbReference type="SMR" id="A0RNU4"/>
<dbReference type="GeneID" id="61064542"/>
<dbReference type="KEGG" id="cff:CFF8240_0703"/>
<dbReference type="eggNOG" id="COG0276">
    <property type="taxonomic scope" value="Bacteria"/>
</dbReference>
<dbReference type="HOGENOM" id="CLU_018884_4_1_7"/>
<dbReference type="UniPathway" id="UPA00252">
    <property type="reaction ID" value="UER00325"/>
</dbReference>
<dbReference type="Proteomes" id="UP000000760">
    <property type="component" value="Chromosome"/>
</dbReference>
<dbReference type="GO" id="GO:0005737">
    <property type="term" value="C:cytoplasm"/>
    <property type="evidence" value="ECO:0007669"/>
    <property type="project" value="UniProtKB-SubCell"/>
</dbReference>
<dbReference type="GO" id="GO:0004325">
    <property type="term" value="F:ferrochelatase activity"/>
    <property type="evidence" value="ECO:0007669"/>
    <property type="project" value="UniProtKB-UniRule"/>
</dbReference>
<dbReference type="GO" id="GO:0046872">
    <property type="term" value="F:metal ion binding"/>
    <property type="evidence" value="ECO:0007669"/>
    <property type="project" value="UniProtKB-KW"/>
</dbReference>
<dbReference type="GO" id="GO:0006783">
    <property type="term" value="P:heme biosynthetic process"/>
    <property type="evidence" value="ECO:0007669"/>
    <property type="project" value="UniProtKB-UniRule"/>
</dbReference>
<dbReference type="CDD" id="cd00419">
    <property type="entry name" value="Ferrochelatase_C"/>
    <property type="match status" value="1"/>
</dbReference>
<dbReference type="CDD" id="cd03411">
    <property type="entry name" value="Ferrochelatase_N"/>
    <property type="match status" value="1"/>
</dbReference>
<dbReference type="Gene3D" id="3.40.50.1400">
    <property type="match status" value="2"/>
</dbReference>
<dbReference type="HAMAP" id="MF_00323">
    <property type="entry name" value="Ferrochelatase"/>
    <property type="match status" value="1"/>
</dbReference>
<dbReference type="InterPro" id="IPR001015">
    <property type="entry name" value="Ferrochelatase"/>
</dbReference>
<dbReference type="InterPro" id="IPR019772">
    <property type="entry name" value="Ferrochelatase_AS"/>
</dbReference>
<dbReference type="InterPro" id="IPR033644">
    <property type="entry name" value="Ferrochelatase_C"/>
</dbReference>
<dbReference type="InterPro" id="IPR033659">
    <property type="entry name" value="Ferrochelatase_N"/>
</dbReference>
<dbReference type="NCBIfam" id="TIGR00109">
    <property type="entry name" value="hemH"/>
    <property type="match status" value="1"/>
</dbReference>
<dbReference type="PANTHER" id="PTHR11108">
    <property type="entry name" value="FERROCHELATASE"/>
    <property type="match status" value="1"/>
</dbReference>
<dbReference type="PANTHER" id="PTHR11108:SF1">
    <property type="entry name" value="FERROCHELATASE, MITOCHONDRIAL"/>
    <property type="match status" value="1"/>
</dbReference>
<dbReference type="Pfam" id="PF00762">
    <property type="entry name" value="Ferrochelatase"/>
    <property type="match status" value="1"/>
</dbReference>
<dbReference type="SUPFAM" id="SSF53800">
    <property type="entry name" value="Chelatase"/>
    <property type="match status" value="1"/>
</dbReference>
<dbReference type="PROSITE" id="PS00534">
    <property type="entry name" value="FERROCHELATASE"/>
    <property type="match status" value="1"/>
</dbReference>
<proteinExistence type="inferred from homology"/>
<feature type="chain" id="PRO_1000119603" description="Ferrochelatase">
    <location>
        <begin position="1"/>
        <end position="314"/>
    </location>
</feature>
<feature type="binding site" evidence="1">
    <location>
        <position position="188"/>
    </location>
    <ligand>
        <name>Fe cation</name>
        <dbReference type="ChEBI" id="CHEBI:24875"/>
    </ligand>
</feature>
<feature type="binding site" evidence="1">
    <location>
        <position position="269"/>
    </location>
    <ligand>
        <name>Fe cation</name>
        <dbReference type="ChEBI" id="CHEBI:24875"/>
    </ligand>
</feature>
<gene>
    <name evidence="1" type="primary">hemH</name>
    <name type="ordered locus">CFF8240_0703</name>
</gene>
<sequence>MKKVVILLNMGGADDLSQVELFLKNMFNDPYILGIKNRKIRSVLAWLITKMRLKSATRNYTELGGKSPIGDITRSLIDKLNIKFGNENLTFDYAMNYTPPFAIDSLKKYKYADEILLFPLYPHHSRTTIVSSLDSANRAIKELSIKSNIKVINYFYKDERYNKIITSSIKEKIAEMNSSQIDLIFSSHSLPKKIIEKGDLYETHTNEHVKIISDMLAKDGVKFNSISLAYQSRLGPVEWLGPNLSEVLSNLKSKKALIYPISFCIDNSETDFELDIEYRKIADQKEFDYYEVVKAPDDSEAFVDYIAYKVKELV</sequence>
<name>HEMH_CAMFF</name>
<comment type="function">
    <text evidence="1">Catalyzes the ferrous insertion into protoporphyrin IX.</text>
</comment>
<comment type="catalytic activity">
    <reaction evidence="1">
        <text>heme b + 2 H(+) = protoporphyrin IX + Fe(2+)</text>
        <dbReference type="Rhea" id="RHEA:22584"/>
        <dbReference type="ChEBI" id="CHEBI:15378"/>
        <dbReference type="ChEBI" id="CHEBI:29033"/>
        <dbReference type="ChEBI" id="CHEBI:57306"/>
        <dbReference type="ChEBI" id="CHEBI:60344"/>
        <dbReference type="EC" id="4.98.1.1"/>
    </reaction>
</comment>
<comment type="pathway">
    <text evidence="1">Porphyrin-containing compound metabolism; protoheme biosynthesis; protoheme from protoporphyrin-IX: step 1/1.</text>
</comment>
<comment type="subcellular location">
    <subcellularLocation>
        <location evidence="1">Cytoplasm</location>
    </subcellularLocation>
</comment>
<comment type="similarity">
    <text evidence="1">Belongs to the ferrochelatase family.</text>
</comment>
<keyword id="KW-0963">Cytoplasm</keyword>
<keyword id="KW-0350">Heme biosynthesis</keyword>
<keyword id="KW-0408">Iron</keyword>
<keyword id="KW-0456">Lyase</keyword>
<keyword id="KW-0479">Metal-binding</keyword>
<keyword id="KW-0627">Porphyrin biosynthesis</keyword>
<accession>A0RNU4</accession>
<organism>
    <name type="scientific">Campylobacter fetus subsp. fetus (strain 82-40)</name>
    <dbReference type="NCBI Taxonomy" id="360106"/>
    <lineage>
        <taxon>Bacteria</taxon>
        <taxon>Pseudomonadati</taxon>
        <taxon>Campylobacterota</taxon>
        <taxon>Epsilonproteobacteria</taxon>
        <taxon>Campylobacterales</taxon>
        <taxon>Campylobacteraceae</taxon>
        <taxon>Campylobacter</taxon>
    </lineage>
</organism>
<reference key="1">
    <citation type="submission" date="2006-11" db="EMBL/GenBank/DDBJ databases">
        <title>Sequence of Campylobacter fetus subsp. fetus 82-40.</title>
        <authorList>
            <person name="Fouts D.E."/>
            <person name="Nelson K.E."/>
        </authorList>
    </citation>
    <scope>NUCLEOTIDE SEQUENCE [LARGE SCALE GENOMIC DNA]</scope>
    <source>
        <strain>82-40</strain>
    </source>
</reference>